<dbReference type="EMBL" id="U31782">
    <property type="protein sequence ID" value="AAA79420.1"/>
    <property type="molecule type" value="Genomic_DNA"/>
</dbReference>
<dbReference type="Proteomes" id="UP000158064">
    <property type="component" value="Genome"/>
</dbReference>
<dbReference type="GO" id="GO:0043657">
    <property type="term" value="C:host cell"/>
    <property type="evidence" value="ECO:0007669"/>
    <property type="project" value="GOC"/>
</dbReference>
<dbReference type="GO" id="GO:0044174">
    <property type="term" value="C:host cell endosome"/>
    <property type="evidence" value="ECO:0007669"/>
    <property type="project" value="UniProtKB-KW"/>
</dbReference>
<dbReference type="GO" id="GO:0044177">
    <property type="term" value="C:host cell Golgi apparatus"/>
    <property type="evidence" value="ECO:0007669"/>
    <property type="project" value="UniProtKB-SubCell"/>
</dbReference>
<dbReference type="GO" id="GO:0042025">
    <property type="term" value="C:host cell nucleus"/>
    <property type="evidence" value="ECO:0007669"/>
    <property type="project" value="UniProtKB-SubCell"/>
</dbReference>
<dbReference type="GO" id="GO:0019028">
    <property type="term" value="C:viral capsid"/>
    <property type="evidence" value="ECO:0007669"/>
    <property type="project" value="UniProtKB-UniRule"/>
</dbReference>
<dbReference type="GO" id="GO:0003677">
    <property type="term" value="F:DNA binding"/>
    <property type="evidence" value="ECO:0007669"/>
    <property type="project" value="UniProtKB-UniRule"/>
</dbReference>
<dbReference type="GO" id="GO:0005198">
    <property type="term" value="F:structural molecule activity"/>
    <property type="evidence" value="ECO:0007669"/>
    <property type="project" value="UniProtKB-UniRule"/>
</dbReference>
<dbReference type="GO" id="GO:0075521">
    <property type="term" value="P:microtubule-dependent intracellular transport of viral material towards nucleus"/>
    <property type="evidence" value="ECO:0007669"/>
    <property type="project" value="UniProtKB-UniRule"/>
</dbReference>
<dbReference type="GO" id="GO:0046718">
    <property type="term" value="P:symbiont entry into host cell"/>
    <property type="evidence" value="ECO:0007669"/>
    <property type="project" value="UniProtKB-KW"/>
</dbReference>
<dbReference type="GO" id="GO:0075732">
    <property type="term" value="P:viral penetration into host nucleus"/>
    <property type="evidence" value="ECO:0007669"/>
    <property type="project" value="UniProtKB-KW"/>
</dbReference>
<dbReference type="HAMAP" id="MF_04003">
    <property type="entry name" value="PPV_L2"/>
    <property type="match status" value="1"/>
</dbReference>
<dbReference type="InterPro" id="IPR000784">
    <property type="entry name" value="Late_L2"/>
</dbReference>
<dbReference type="Pfam" id="PF00513">
    <property type="entry name" value="Late_protein_L2"/>
    <property type="match status" value="1"/>
</dbReference>
<feature type="chain" id="PRO_0000133591" description="Minor capsid protein L2">
    <location>
        <begin position="1"/>
        <end position="523"/>
    </location>
</feature>
<feature type="short sequence motif" description="Nuclear localization signal" evidence="1">
    <location>
        <begin position="1"/>
        <end position="10"/>
    </location>
</feature>
<feature type="short sequence motif" description="Nuclear localization signal" evidence="1">
    <location>
        <begin position="514"/>
        <end position="522"/>
    </location>
</feature>
<feature type="disulfide bond" evidence="1">
    <location>
        <begin position="19"/>
        <end position="25"/>
    </location>
</feature>
<evidence type="ECO:0000255" key="1">
    <source>
        <dbReference type="HAMAP-Rule" id="MF_04003"/>
    </source>
</evidence>
<keyword id="KW-0167">Capsid protein</keyword>
<keyword id="KW-1176">Cytoplasmic inwards viral transport</keyword>
<keyword id="KW-1015">Disulfide bond</keyword>
<keyword id="KW-0238">DNA-binding</keyword>
<keyword id="KW-1039">Host endosome</keyword>
<keyword id="KW-1040">Host Golgi apparatus</keyword>
<keyword id="KW-1048">Host nucleus</keyword>
<keyword id="KW-0945">Host-virus interaction</keyword>
<keyword id="KW-0426">Late protein</keyword>
<keyword id="KW-1177">Microtubular inwards viral transport</keyword>
<keyword id="KW-0597">Phosphoprotein</keyword>
<keyword id="KW-1185">Reference proteome</keyword>
<keyword id="KW-1163">Viral penetration into host nucleus</keyword>
<keyword id="KW-0946">Virion</keyword>
<keyword id="KW-1160">Virus entry into host cell</keyword>
<accession>P50798</accession>
<reference key="1">
    <citation type="submission" date="1995-10" db="EMBL/GenBank/DDBJ databases">
        <authorList>
            <person name="Delius H."/>
        </authorList>
    </citation>
    <scope>NUCLEOTIDE SEQUENCE [GENOMIC DNA]</scope>
</reference>
<gene>
    <name evidence="1" type="primary">L2</name>
</gene>
<name>VL2_HPV24</name>
<proteinExistence type="inferred from homology"/>
<sequence>MVRAKRTKRDSATNIYRTCKQAGTCPPDVINKVEQSTIADNILKYGSAGVFFGGLGISTGRGTGGTTGYVPLGEGTGVRVGSTPTVVRPALVPEVIGPADLLPVDTIAPVDPASSSIVPLTESSGVDLLPGEIETIAEVHPIPDVPTFDTPVVTTSKGSSAILEVAPEPTPPTRVRVSRTQYHNPAFHIITESTPSQGESSLSDEIIVASGAGGQSVGVSENIELQDLSNRYSFEIETPTPPRRSSTPLQRATQAFRQRSLTNRRLLQQVPVEDPLFLTQPSKLVRFAFENPAFEEEVTQVFEQDLAGFVEPPNRDFLDIAELGRPRFSETREGYVRLSRLGRRATIRTRAGTQIGAQVHFYKDLSSINTEAPIELDLLGQHSGDATIVHGTVESTFIDTNIEENPLAEQMELEIDTYPEAHSFDALLDEATDDFSGSQLVIGNRRSTTSYTVPRFESPRNSSYYVQDLQGYYVAYPESRDKIELIYPSPTLPAVVIHTEDSSGDFYLHPSLLQRRRRKRKYL</sequence>
<organismHost>
    <name type="scientific">Homo sapiens</name>
    <name type="common">Human</name>
    <dbReference type="NCBI Taxonomy" id="9606"/>
</organismHost>
<protein>
    <recommendedName>
        <fullName evidence="1">Minor capsid protein L2</fullName>
    </recommendedName>
</protein>
<organism>
    <name type="scientific">Human papillomavirus 24</name>
    <dbReference type="NCBI Taxonomy" id="37956"/>
    <lineage>
        <taxon>Viruses</taxon>
        <taxon>Monodnaviria</taxon>
        <taxon>Shotokuvirae</taxon>
        <taxon>Cossaviricota</taxon>
        <taxon>Papovaviricetes</taxon>
        <taxon>Zurhausenvirales</taxon>
        <taxon>Papillomaviridae</taxon>
        <taxon>Firstpapillomavirinae</taxon>
        <taxon>Betapapillomavirus</taxon>
        <taxon>Betapapillomavirus 1</taxon>
    </lineage>
</organism>
<comment type="function">
    <text evidence="1">Minor protein of the capsid that localizes along the inner surface of the virion, within the central cavities beneath the L1 pentamers. Plays a role in capsid stabilization through interaction with the major capsid protein L1. Once the virion enters the host cell, L2 escorts the genomic DNA into the nucleus by promoting escape from the endosomal compartments and traffic through the host Golgi network. Mechanistically, the C-terminus of L2 possesses a cell-penetrating peptide that protudes from the host endosome, interacts with host cytoplasmic retromer cargo and thereby mediates the capsid delivery to the host trans-Golgi network. Plays a role through its interaction with host dynein in the intracellular microtubule-dependent transport of viral capsid toward the nucleus. Mediates the viral genome import into the nucleus through binding to host importins. Once within the nucleus, L2 localizes viral genomes to host PML bodies in order to activate early gene expression for establishment of infection. Later on, promotes late gene expression by interacting with the viral E2 protein and by inhibiting its transcriptional activation functions. During virion assembly, encapsidates the genome by direct interaction with the viral DNA.</text>
</comment>
<comment type="subunit">
    <text evidence="1">Interacts with major capsid protein L1. Interacts with E2; this interaction inhibits E2 transcriptional activity but not the DNA replication function E2. Interacts with host GADD45GIP1. Interacts with host HSPA8; this interaction is required for L2 nuclear translocation. Interacts with host importins KPNB2 and KPNB3. Forms a complex with importin alpha2-beta1 heterodimers via interaction with the importin alpha2 adapter. Interacts with host DYNLT1; this interaction is essential for virus intracellular transport during entry. Interacts (via C-terminus) with host retromer subunits VPS35 and VPS29.</text>
</comment>
<comment type="subcellular location">
    <subcellularLocation>
        <location evidence="1">Virion</location>
    </subcellularLocation>
    <subcellularLocation>
        <location evidence="1">Host nucleus</location>
    </subcellularLocation>
    <subcellularLocation>
        <location evidence="1">Host early endosome</location>
    </subcellularLocation>
    <subcellularLocation>
        <location evidence="1">Host Golgi apparatus</location>
    </subcellularLocation>
</comment>
<comment type="PTM">
    <text evidence="1">Highly phosphorylated.</text>
</comment>
<comment type="similarity">
    <text evidence="1">Belongs to the papillomaviridae L2 protein family.</text>
</comment>